<dbReference type="EC" id="6.1.1.11" evidence="1"/>
<dbReference type="EMBL" id="AL111168">
    <property type="protein sequence ID" value="CAL34539.1"/>
    <property type="molecule type" value="Genomic_DNA"/>
</dbReference>
<dbReference type="PIR" id="C81382">
    <property type="entry name" value="C81382"/>
</dbReference>
<dbReference type="RefSeq" id="WP_002858681.1">
    <property type="nucleotide sequence ID" value="NZ_SZUC01000004.1"/>
</dbReference>
<dbReference type="RefSeq" id="YP_002343826.1">
    <property type="nucleotide sequence ID" value="NC_002163.1"/>
</dbReference>
<dbReference type="SMR" id="Q9PIB3"/>
<dbReference type="IntAct" id="Q9PIB3">
    <property type="interactions" value="33"/>
</dbReference>
<dbReference type="STRING" id="192222.Cj0389"/>
<dbReference type="PaxDb" id="192222-Cj0389"/>
<dbReference type="EnsemblBacteria" id="CAL34539">
    <property type="protein sequence ID" value="CAL34539"/>
    <property type="gene ID" value="Cj0389"/>
</dbReference>
<dbReference type="GeneID" id="904712"/>
<dbReference type="KEGG" id="cje:Cj0389"/>
<dbReference type="PATRIC" id="fig|192222.6.peg.380"/>
<dbReference type="eggNOG" id="COG0172">
    <property type="taxonomic scope" value="Bacteria"/>
</dbReference>
<dbReference type="HOGENOM" id="CLU_023797_1_1_7"/>
<dbReference type="OrthoDB" id="9804647at2"/>
<dbReference type="UniPathway" id="UPA00906">
    <property type="reaction ID" value="UER00895"/>
</dbReference>
<dbReference type="Proteomes" id="UP000000799">
    <property type="component" value="Chromosome"/>
</dbReference>
<dbReference type="GO" id="GO:0005737">
    <property type="term" value="C:cytoplasm"/>
    <property type="evidence" value="ECO:0007669"/>
    <property type="project" value="UniProtKB-SubCell"/>
</dbReference>
<dbReference type="GO" id="GO:0005524">
    <property type="term" value="F:ATP binding"/>
    <property type="evidence" value="ECO:0007669"/>
    <property type="project" value="UniProtKB-UniRule"/>
</dbReference>
<dbReference type="GO" id="GO:0004828">
    <property type="term" value="F:serine-tRNA ligase activity"/>
    <property type="evidence" value="ECO:0007669"/>
    <property type="project" value="UniProtKB-UniRule"/>
</dbReference>
<dbReference type="GO" id="GO:0016260">
    <property type="term" value="P:selenocysteine biosynthetic process"/>
    <property type="evidence" value="ECO:0007669"/>
    <property type="project" value="UniProtKB-UniRule"/>
</dbReference>
<dbReference type="GO" id="GO:0006434">
    <property type="term" value="P:seryl-tRNA aminoacylation"/>
    <property type="evidence" value="ECO:0007669"/>
    <property type="project" value="UniProtKB-UniRule"/>
</dbReference>
<dbReference type="CDD" id="cd00770">
    <property type="entry name" value="SerRS_core"/>
    <property type="match status" value="1"/>
</dbReference>
<dbReference type="Gene3D" id="3.30.930.10">
    <property type="entry name" value="Bira Bifunctional Protein, Domain 2"/>
    <property type="match status" value="1"/>
</dbReference>
<dbReference type="Gene3D" id="1.10.287.40">
    <property type="entry name" value="Serine-tRNA synthetase, tRNA binding domain"/>
    <property type="match status" value="1"/>
</dbReference>
<dbReference type="HAMAP" id="MF_00176">
    <property type="entry name" value="Ser_tRNA_synth_type1"/>
    <property type="match status" value="1"/>
</dbReference>
<dbReference type="InterPro" id="IPR002314">
    <property type="entry name" value="aa-tRNA-synt_IIb"/>
</dbReference>
<dbReference type="InterPro" id="IPR006195">
    <property type="entry name" value="aa-tRNA-synth_II"/>
</dbReference>
<dbReference type="InterPro" id="IPR045864">
    <property type="entry name" value="aa-tRNA-synth_II/BPL/LPL"/>
</dbReference>
<dbReference type="InterPro" id="IPR002317">
    <property type="entry name" value="Ser-tRNA-ligase_type_1"/>
</dbReference>
<dbReference type="InterPro" id="IPR015866">
    <property type="entry name" value="Ser-tRNA-synth_1_N"/>
</dbReference>
<dbReference type="InterPro" id="IPR042103">
    <property type="entry name" value="SerRS_1_N_sf"/>
</dbReference>
<dbReference type="InterPro" id="IPR033729">
    <property type="entry name" value="SerRS_core"/>
</dbReference>
<dbReference type="InterPro" id="IPR010978">
    <property type="entry name" value="tRNA-bd_arm"/>
</dbReference>
<dbReference type="NCBIfam" id="TIGR00414">
    <property type="entry name" value="serS"/>
    <property type="match status" value="1"/>
</dbReference>
<dbReference type="PANTHER" id="PTHR43697:SF1">
    <property type="entry name" value="SERINE--TRNA LIGASE"/>
    <property type="match status" value="1"/>
</dbReference>
<dbReference type="PANTHER" id="PTHR43697">
    <property type="entry name" value="SERYL-TRNA SYNTHETASE"/>
    <property type="match status" value="1"/>
</dbReference>
<dbReference type="Pfam" id="PF02403">
    <property type="entry name" value="Seryl_tRNA_N"/>
    <property type="match status" value="1"/>
</dbReference>
<dbReference type="Pfam" id="PF00587">
    <property type="entry name" value="tRNA-synt_2b"/>
    <property type="match status" value="1"/>
</dbReference>
<dbReference type="PIRSF" id="PIRSF001529">
    <property type="entry name" value="Ser-tRNA-synth_IIa"/>
    <property type="match status" value="1"/>
</dbReference>
<dbReference type="PRINTS" id="PR00981">
    <property type="entry name" value="TRNASYNTHSER"/>
</dbReference>
<dbReference type="SUPFAM" id="SSF55681">
    <property type="entry name" value="Class II aaRS and biotin synthetases"/>
    <property type="match status" value="1"/>
</dbReference>
<dbReference type="SUPFAM" id="SSF46589">
    <property type="entry name" value="tRNA-binding arm"/>
    <property type="match status" value="1"/>
</dbReference>
<dbReference type="PROSITE" id="PS50862">
    <property type="entry name" value="AA_TRNA_LIGASE_II"/>
    <property type="match status" value="1"/>
</dbReference>
<organism>
    <name type="scientific">Campylobacter jejuni subsp. jejuni serotype O:2 (strain ATCC 700819 / NCTC 11168)</name>
    <dbReference type="NCBI Taxonomy" id="192222"/>
    <lineage>
        <taxon>Bacteria</taxon>
        <taxon>Pseudomonadati</taxon>
        <taxon>Campylobacterota</taxon>
        <taxon>Epsilonproteobacteria</taxon>
        <taxon>Campylobacterales</taxon>
        <taxon>Campylobacteraceae</taxon>
        <taxon>Campylobacter</taxon>
    </lineage>
</organism>
<proteinExistence type="inferred from homology"/>
<name>SYS_CAMJE</name>
<sequence length="411" mass="46583">MLDLKNLQNNFDEVAKKLKNKKVDENILKKLAELFASLKKEKIALEEFQAFQNKFSKELATAEDKESLKAKLSENKSKINEQSAKVNALENELEEIAHAIPNIPDECVPVGEDENENVELKKVLNPPSFDFTPKEHFELGESLNWLDFMRGVKISQSRFCVLKNEGALLSRALVNYMIDFNRSRGFEFVNVPFLVNGATMFGTGQLPKFKEDMYKVDDEDLYLISTSEIPVTNLYSGEILASETLPIKMTCYSACFRKEAGSAGRDTRGIIRQHQFEKVELVSITKPEQSDSVFNEMLECASDLLSSLGLAHRHLMLCTGDLGFSAAKTVDLEVWLPGQNKYREISSVSNCRDFQARRAKIRYKNEQGKNELVHTLNGSSLAVGRTLVAIMENYQDKEGKIHIPDVLKKYF</sequence>
<gene>
    <name evidence="1" type="primary">serS</name>
    <name type="ordered locus">Cj0389</name>
</gene>
<accession>Q9PIB3</accession>
<accession>Q0PBC1</accession>
<evidence type="ECO:0000255" key="1">
    <source>
        <dbReference type="HAMAP-Rule" id="MF_00176"/>
    </source>
</evidence>
<reference key="1">
    <citation type="journal article" date="2000" name="Nature">
        <title>The genome sequence of the food-borne pathogen Campylobacter jejuni reveals hypervariable sequences.</title>
        <authorList>
            <person name="Parkhill J."/>
            <person name="Wren B.W."/>
            <person name="Mungall K.L."/>
            <person name="Ketley J.M."/>
            <person name="Churcher C.M."/>
            <person name="Basham D."/>
            <person name="Chillingworth T."/>
            <person name="Davies R.M."/>
            <person name="Feltwell T."/>
            <person name="Holroyd S."/>
            <person name="Jagels K."/>
            <person name="Karlyshev A.V."/>
            <person name="Moule S."/>
            <person name="Pallen M.J."/>
            <person name="Penn C.W."/>
            <person name="Quail M.A."/>
            <person name="Rajandream M.A."/>
            <person name="Rutherford K.M."/>
            <person name="van Vliet A.H.M."/>
            <person name="Whitehead S."/>
            <person name="Barrell B.G."/>
        </authorList>
    </citation>
    <scope>NUCLEOTIDE SEQUENCE [LARGE SCALE GENOMIC DNA]</scope>
    <source>
        <strain>ATCC 700819 / NCTC 11168</strain>
    </source>
</reference>
<feature type="chain" id="PRO_0000122024" description="Serine--tRNA ligase">
    <location>
        <begin position="1"/>
        <end position="411"/>
    </location>
</feature>
<feature type="binding site" evidence="1">
    <location>
        <begin position="226"/>
        <end position="228"/>
    </location>
    <ligand>
        <name>L-serine</name>
        <dbReference type="ChEBI" id="CHEBI:33384"/>
    </ligand>
</feature>
<feature type="binding site" evidence="1">
    <location>
        <begin position="257"/>
        <end position="259"/>
    </location>
    <ligand>
        <name>ATP</name>
        <dbReference type="ChEBI" id="CHEBI:30616"/>
    </ligand>
</feature>
<feature type="binding site" evidence="1">
    <location>
        <position position="280"/>
    </location>
    <ligand>
        <name>L-serine</name>
        <dbReference type="ChEBI" id="CHEBI:33384"/>
    </ligand>
</feature>
<feature type="binding site" evidence="1">
    <location>
        <begin position="344"/>
        <end position="347"/>
    </location>
    <ligand>
        <name>ATP</name>
        <dbReference type="ChEBI" id="CHEBI:30616"/>
    </ligand>
</feature>
<feature type="binding site" evidence="1">
    <location>
        <position position="379"/>
    </location>
    <ligand>
        <name>L-serine</name>
        <dbReference type="ChEBI" id="CHEBI:33384"/>
    </ligand>
</feature>
<comment type="function">
    <text evidence="1">Catalyzes the attachment of serine to tRNA(Ser). Is also able to aminoacylate tRNA(Sec) with serine, to form the misacylated tRNA L-seryl-tRNA(Sec), which will be further converted into selenocysteinyl-tRNA(Sec).</text>
</comment>
<comment type="catalytic activity">
    <reaction evidence="1">
        <text>tRNA(Ser) + L-serine + ATP = L-seryl-tRNA(Ser) + AMP + diphosphate + H(+)</text>
        <dbReference type="Rhea" id="RHEA:12292"/>
        <dbReference type="Rhea" id="RHEA-COMP:9669"/>
        <dbReference type="Rhea" id="RHEA-COMP:9703"/>
        <dbReference type="ChEBI" id="CHEBI:15378"/>
        <dbReference type="ChEBI" id="CHEBI:30616"/>
        <dbReference type="ChEBI" id="CHEBI:33019"/>
        <dbReference type="ChEBI" id="CHEBI:33384"/>
        <dbReference type="ChEBI" id="CHEBI:78442"/>
        <dbReference type="ChEBI" id="CHEBI:78533"/>
        <dbReference type="ChEBI" id="CHEBI:456215"/>
        <dbReference type="EC" id="6.1.1.11"/>
    </reaction>
</comment>
<comment type="catalytic activity">
    <reaction evidence="1">
        <text>tRNA(Sec) + L-serine + ATP = L-seryl-tRNA(Sec) + AMP + diphosphate + H(+)</text>
        <dbReference type="Rhea" id="RHEA:42580"/>
        <dbReference type="Rhea" id="RHEA-COMP:9742"/>
        <dbReference type="Rhea" id="RHEA-COMP:10128"/>
        <dbReference type="ChEBI" id="CHEBI:15378"/>
        <dbReference type="ChEBI" id="CHEBI:30616"/>
        <dbReference type="ChEBI" id="CHEBI:33019"/>
        <dbReference type="ChEBI" id="CHEBI:33384"/>
        <dbReference type="ChEBI" id="CHEBI:78442"/>
        <dbReference type="ChEBI" id="CHEBI:78533"/>
        <dbReference type="ChEBI" id="CHEBI:456215"/>
        <dbReference type="EC" id="6.1.1.11"/>
    </reaction>
</comment>
<comment type="pathway">
    <text evidence="1">Aminoacyl-tRNA biosynthesis; selenocysteinyl-tRNA(Sec) biosynthesis; L-seryl-tRNA(Sec) from L-serine and tRNA(Sec): step 1/1.</text>
</comment>
<comment type="subunit">
    <text evidence="1">Homodimer. The tRNA molecule binds across the dimer.</text>
</comment>
<comment type="subcellular location">
    <subcellularLocation>
        <location evidence="1">Cytoplasm</location>
    </subcellularLocation>
</comment>
<comment type="domain">
    <text evidence="1">Consists of two distinct domains, a catalytic core and a N-terminal extension that is involved in tRNA binding.</text>
</comment>
<comment type="similarity">
    <text evidence="1">Belongs to the class-II aminoacyl-tRNA synthetase family. Type-1 seryl-tRNA synthetase subfamily.</text>
</comment>
<keyword id="KW-0030">Aminoacyl-tRNA synthetase</keyword>
<keyword id="KW-0067">ATP-binding</keyword>
<keyword id="KW-0963">Cytoplasm</keyword>
<keyword id="KW-0436">Ligase</keyword>
<keyword id="KW-0547">Nucleotide-binding</keyword>
<keyword id="KW-0648">Protein biosynthesis</keyword>
<keyword id="KW-1185">Reference proteome</keyword>
<protein>
    <recommendedName>
        <fullName evidence="1">Serine--tRNA ligase</fullName>
        <ecNumber evidence="1">6.1.1.11</ecNumber>
    </recommendedName>
    <alternativeName>
        <fullName evidence="1">Seryl-tRNA synthetase</fullName>
        <shortName evidence="1">SerRS</shortName>
    </alternativeName>
    <alternativeName>
        <fullName evidence="1">Seryl-tRNA(Ser/Sec) synthetase</fullName>
    </alternativeName>
</protein>